<reference key="1">
    <citation type="journal article" date="1997" name="Nature">
        <title>The complete genome sequence of the gastric pathogen Helicobacter pylori.</title>
        <authorList>
            <person name="Tomb J.-F."/>
            <person name="White O."/>
            <person name="Kerlavage A.R."/>
            <person name="Clayton R.A."/>
            <person name="Sutton G.G."/>
            <person name="Fleischmann R.D."/>
            <person name="Ketchum K.A."/>
            <person name="Klenk H.-P."/>
            <person name="Gill S.R."/>
            <person name="Dougherty B.A."/>
            <person name="Nelson K.E."/>
            <person name="Quackenbush J."/>
            <person name="Zhou L."/>
            <person name="Kirkness E.F."/>
            <person name="Peterson S.N."/>
            <person name="Loftus B.J."/>
            <person name="Richardson D.L."/>
            <person name="Dodson R.J."/>
            <person name="Khalak H.G."/>
            <person name="Glodek A."/>
            <person name="McKenney K."/>
            <person name="FitzGerald L.M."/>
            <person name="Lee N."/>
            <person name="Adams M.D."/>
            <person name="Hickey E.K."/>
            <person name="Berg D.E."/>
            <person name="Gocayne J.D."/>
            <person name="Utterback T.R."/>
            <person name="Peterson J.D."/>
            <person name="Kelley J.M."/>
            <person name="Cotton M.D."/>
            <person name="Weidman J.F."/>
            <person name="Fujii C."/>
            <person name="Bowman C."/>
            <person name="Watthey L."/>
            <person name="Wallin E."/>
            <person name="Hayes W.S."/>
            <person name="Borodovsky M."/>
            <person name="Karp P.D."/>
            <person name="Smith H.O."/>
            <person name="Fraser C.M."/>
            <person name="Venter J.C."/>
        </authorList>
    </citation>
    <scope>NUCLEOTIDE SEQUENCE [LARGE SCALE GENOMIC DNA]</scope>
    <source>
        <strain>ATCC 700392 / 26695</strain>
    </source>
</reference>
<reference key="2">
    <citation type="journal article" date="2004" name="Helicobacter">
        <title>Helicobacter pylori HP1034 (ylxH) is required for motility.</title>
        <authorList>
            <person name="van Amsterdam K."/>
            <person name="van der Ende A."/>
        </authorList>
    </citation>
    <scope>FUNCTION</scope>
    <scope>DISRUPTION PHENOTYPE</scope>
    <source>
        <strain>11A</strain>
    </source>
</reference>
<comment type="function">
    <text evidence="2">Involved in the placement and assembly of flagella.</text>
</comment>
<comment type="disruption phenotype">
    <text evidence="2">Non-motile, has no flagella, and has reduced expression of FlaA.</text>
</comment>
<comment type="similarity">
    <text evidence="3">Belongs to the ParA family.</text>
</comment>
<proteinExistence type="inferred from homology"/>
<organism>
    <name type="scientific">Helicobacter pylori (strain ATCC 700392 / 26695)</name>
    <name type="common">Campylobacter pylori</name>
    <dbReference type="NCBI Taxonomy" id="85962"/>
    <lineage>
        <taxon>Bacteria</taxon>
        <taxon>Pseudomonadati</taxon>
        <taxon>Campylobacterota</taxon>
        <taxon>Epsilonproteobacteria</taxon>
        <taxon>Campylobacterales</taxon>
        <taxon>Helicobacteraceae</taxon>
        <taxon>Helicobacter</taxon>
    </lineage>
</organism>
<protein>
    <recommendedName>
        <fullName>Flagellum site-determining protein YlxH</fullName>
    </recommendedName>
</protein>
<evidence type="ECO:0000255" key="1"/>
<evidence type="ECO:0000269" key="2">
    <source>
    </source>
</evidence>
<evidence type="ECO:0000305" key="3"/>
<feature type="chain" id="PRO_0000419250" description="Flagellum site-determining protein YlxH">
    <location>
        <begin position="1"/>
        <end position="294"/>
    </location>
</feature>
<feature type="binding site" evidence="1">
    <location>
        <begin position="35"/>
        <end position="42"/>
    </location>
    <ligand>
        <name>ATP</name>
        <dbReference type="ChEBI" id="CHEBI:30616"/>
    </ligand>
</feature>
<sequence>MNNQASRLDNLMNIKNPKSFFDNKGNTKFIAITSGKGGVGKSNISANLAYSLYKKGYKVGVFDADIGLANLDVIFGVKTHKNILHALKGEAKLQEIICEIEPGLCLIPGDSGEEILKYISGAEALDQFVDEEGVLSSLDYIVVDTGAGIGATTQAFLNASDCVVIVTTPDPSAITDAYACIKINSKNKDELFLIANMVAQPKEGRATYERLFKVAKNNIASLELHYLGAIENSSLLKRYVRERKILRKIAPNDLFSQSIDQIAGLLVSKLETGALEIPKEGLKSFFKRLLKYLG</sequence>
<name>YLXH_HELPY</name>
<gene>
    <name type="primary">ylxH</name>
    <name type="ordered locus">HP_1034</name>
</gene>
<accession>O25678</accession>
<dbReference type="EMBL" id="AE000511">
    <property type="protein sequence ID" value="AAD08077.1"/>
    <property type="molecule type" value="Genomic_DNA"/>
</dbReference>
<dbReference type="PIR" id="B64649">
    <property type="entry name" value="B64649"/>
</dbReference>
<dbReference type="RefSeq" id="NP_207824.1">
    <property type="nucleotide sequence ID" value="NC_000915.1"/>
</dbReference>
<dbReference type="RefSeq" id="WP_001064464.1">
    <property type="nucleotide sequence ID" value="NC_018939.1"/>
</dbReference>
<dbReference type="SMR" id="O25678"/>
<dbReference type="DIP" id="DIP-3249N"/>
<dbReference type="IntAct" id="O25678">
    <property type="interactions" value="12"/>
</dbReference>
<dbReference type="MINT" id="O25678"/>
<dbReference type="STRING" id="85962.HP_1034"/>
<dbReference type="PaxDb" id="85962-C694_05350"/>
<dbReference type="EnsemblBacteria" id="AAD08077">
    <property type="protein sequence ID" value="AAD08077"/>
    <property type="gene ID" value="HP_1034"/>
</dbReference>
<dbReference type="KEGG" id="heo:C694_05350"/>
<dbReference type="KEGG" id="hpy:HP_1034"/>
<dbReference type="PATRIC" id="fig|85962.47.peg.1113"/>
<dbReference type="eggNOG" id="COG0455">
    <property type="taxonomic scope" value="Bacteria"/>
</dbReference>
<dbReference type="InParanoid" id="O25678"/>
<dbReference type="OrthoDB" id="9773088at2"/>
<dbReference type="PhylomeDB" id="O25678"/>
<dbReference type="Proteomes" id="UP000000429">
    <property type="component" value="Chromosome"/>
</dbReference>
<dbReference type="GO" id="GO:0009898">
    <property type="term" value="C:cytoplasmic side of plasma membrane"/>
    <property type="evidence" value="ECO:0000318"/>
    <property type="project" value="GO_Central"/>
</dbReference>
<dbReference type="GO" id="GO:0005829">
    <property type="term" value="C:cytosol"/>
    <property type="evidence" value="ECO:0000318"/>
    <property type="project" value="GO_Central"/>
</dbReference>
<dbReference type="GO" id="GO:0005524">
    <property type="term" value="F:ATP binding"/>
    <property type="evidence" value="ECO:0000318"/>
    <property type="project" value="GO_Central"/>
</dbReference>
<dbReference type="GO" id="GO:0016887">
    <property type="term" value="F:ATP hydrolysis activity"/>
    <property type="evidence" value="ECO:0000318"/>
    <property type="project" value="GO_Central"/>
</dbReference>
<dbReference type="GO" id="GO:0044781">
    <property type="term" value="P:bacterial-type flagellum organization"/>
    <property type="evidence" value="ECO:0007669"/>
    <property type="project" value="UniProtKB-KW"/>
</dbReference>
<dbReference type="CDD" id="cd02038">
    <property type="entry name" value="FlhG-like"/>
    <property type="match status" value="1"/>
</dbReference>
<dbReference type="FunFam" id="3.40.50.300:FF:000285">
    <property type="entry name" value="Sporulation initiation inhibitor Soj"/>
    <property type="match status" value="1"/>
</dbReference>
<dbReference type="Gene3D" id="3.40.50.300">
    <property type="entry name" value="P-loop containing nucleotide triphosphate hydrolases"/>
    <property type="match status" value="1"/>
</dbReference>
<dbReference type="InterPro" id="IPR033875">
    <property type="entry name" value="FlhG"/>
</dbReference>
<dbReference type="InterPro" id="IPR025501">
    <property type="entry name" value="MinD_FleN"/>
</dbReference>
<dbReference type="InterPro" id="IPR027417">
    <property type="entry name" value="P-loop_NTPase"/>
</dbReference>
<dbReference type="InterPro" id="IPR050625">
    <property type="entry name" value="ParA/MinD_ATPase"/>
</dbReference>
<dbReference type="InterPro" id="IPR033756">
    <property type="entry name" value="YlxH/NBP35"/>
</dbReference>
<dbReference type="PANTHER" id="PTHR43384:SF4">
    <property type="entry name" value="CELLULOSE BIOSYNTHESIS PROTEIN BCSQ-RELATED"/>
    <property type="match status" value="1"/>
</dbReference>
<dbReference type="PANTHER" id="PTHR43384">
    <property type="entry name" value="SEPTUM SITE-DETERMINING PROTEIN MIND HOMOLOG, CHLOROPLASTIC-RELATED"/>
    <property type="match status" value="1"/>
</dbReference>
<dbReference type="Pfam" id="PF10609">
    <property type="entry name" value="ParA"/>
    <property type="match status" value="1"/>
</dbReference>
<dbReference type="PIRSF" id="PIRSF003092">
    <property type="entry name" value="MinD"/>
    <property type="match status" value="1"/>
</dbReference>
<dbReference type="SUPFAM" id="SSF52540">
    <property type="entry name" value="P-loop containing nucleoside triphosphate hydrolases"/>
    <property type="match status" value="1"/>
</dbReference>
<keyword id="KW-0067">ATP-binding</keyword>
<keyword id="KW-1005">Bacterial flagellum biogenesis</keyword>
<keyword id="KW-0547">Nucleotide-binding</keyword>
<keyword id="KW-1185">Reference proteome</keyword>